<evidence type="ECO:0000256" key="1">
    <source>
        <dbReference type="SAM" id="MobiDB-lite"/>
    </source>
</evidence>
<reference key="1">
    <citation type="submission" date="1994-01" db="EMBL/GenBank/DDBJ databases">
        <title>Near identity in the polymerase gene of two serologically distinct nodaviruses.</title>
        <authorList>
            <person name="Dasgupta R."/>
        </authorList>
    </citation>
    <scope>NUCLEOTIDE SEQUENCE [GENOMIC RNA]</scope>
</reference>
<organism>
    <name type="scientific">Flock house virus</name>
    <name type="common">FHV</name>
    <dbReference type="NCBI Taxonomy" id="12287"/>
    <lineage>
        <taxon>Viruses</taxon>
        <taxon>Riboviria</taxon>
        <taxon>Orthornavirae</taxon>
        <taxon>Kitrinoviricota</taxon>
        <taxon>Magsaviricetes</taxon>
        <taxon>Nodamuvirales</taxon>
        <taxon>Nodaviridae</taxon>
        <taxon>Alphanodavirus</taxon>
    </lineage>
</organism>
<proteinExistence type="predicted"/>
<gene>
    <name type="primary">B1</name>
</gene>
<dbReference type="EMBL" id="X77156">
    <property type="protein sequence ID" value="CAA54400.1"/>
    <property type="molecule type" value="Genomic_RNA"/>
</dbReference>
<dbReference type="OrthoDB" id="155at10239"/>
<dbReference type="Proteomes" id="UP000203899">
    <property type="component" value="Genome"/>
</dbReference>
<protein>
    <recommendedName>
        <fullName>Protein B1</fullName>
    </recommendedName>
</protein>
<accession>P68829</accession>
<accession>P29099</accession>
<organismHost>
    <name type="scientific">Costelytra zealandica</name>
    <dbReference type="NCBI Taxonomy" id="50579"/>
</organismHost>
<organismHost>
    <name type="scientific">Galleria mellonella</name>
    <name type="common">Greater wax moth</name>
    <dbReference type="NCBI Taxonomy" id="7137"/>
</organismHost>
<organismHost>
    <name type="scientific">Hordeum vulgare</name>
    <name type="common">Barley</name>
    <dbReference type="NCBI Taxonomy" id="4513"/>
</organismHost>
<organismHost>
    <name type="scientific">Saccharomyces cerevisiae</name>
    <name type="common">Baker's yeast</name>
    <dbReference type="NCBI Taxonomy" id="4932"/>
</organismHost>
<feature type="chain" id="PRO_0000222452" description="Protein B1">
    <location>
        <begin position="1"/>
        <end position="102"/>
    </location>
</feature>
<feature type="region of interest" description="Disordered" evidence="1">
    <location>
        <begin position="1"/>
        <end position="102"/>
    </location>
</feature>
<feature type="compositionally biased region" description="Polar residues" evidence="1">
    <location>
        <begin position="8"/>
        <end position="17"/>
    </location>
</feature>
<feature type="compositionally biased region" description="Polar residues" evidence="1">
    <location>
        <begin position="51"/>
        <end position="65"/>
    </location>
</feature>
<feature type="compositionally biased region" description="Basic residues" evidence="1">
    <location>
        <begin position="75"/>
        <end position="88"/>
    </location>
</feature>
<sequence>MLNDAKQTRANPGTSRPHSNGGGSSHGNELPRRTEQRAQGPRQPARLPKQGKTNGKSDGNITAGETQRGGIPRGKGPRGGKTNTRRTPPKAGAQPQPSNNRK</sequence>
<comment type="function">
    <text>Not known. Encoded on a subgenomic RNA (RNA3) synthesized during replication and which is co-terminal with RNA1.</text>
</comment>
<name>B1_FHV</name>